<protein>
    <recommendedName>
        <fullName evidence="1">Cytochrome c-type biogenesis protein CcmE</fullName>
    </recommendedName>
    <alternativeName>
        <fullName evidence="1">Cytochrome c maturation protein E</fullName>
    </alternativeName>
    <alternativeName>
        <fullName evidence="1">Heme chaperone CcmE</fullName>
    </alternativeName>
</protein>
<feature type="chain" id="PRO_1000189043" description="Cytochrome c-type biogenesis protein CcmE">
    <location>
        <begin position="1"/>
        <end position="156"/>
    </location>
</feature>
<feature type="topological domain" description="Cytoplasmic" evidence="1">
    <location>
        <begin position="1"/>
        <end position="7"/>
    </location>
</feature>
<feature type="transmembrane region" description="Helical; Signal-anchor for type II membrane protein" evidence="1">
    <location>
        <begin position="8"/>
        <end position="28"/>
    </location>
</feature>
<feature type="topological domain" description="Periplasmic" evidence="1">
    <location>
        <begin position="29"/>
        <end position="156"/>
    </location>
</feature>
<feature type="binding site" description="covalent" evidence="1">
    <location>
        <position position="123"/>
    </location>
    <ligand>
        <name>heme</name>
        <dbReference type="ChEBI" id="CHEBI:30413"/>
    </ligand>
</feature>
<feature type="binding site" description="axial binding residue" evidence="1">
    <location>
        <position position="127"/>
    </location>
    <ligand>
        <name>heme</name>
        <dbReference type="ChEBI" id="CHEBI:30413"/>
    </ligand>
    <ligandPart>
        <name>Fe</name>
        <dbReference type="ChEBI" id="CHEBI:18248"/>
    </ligandPart>
</feature>
<proteinExistence type="inferred from homology"/>
<gene>
    <name evidence="1" type="primary">ccmE</name>
    <name evidence="1" type="synonym">cycJ</name>
    <name type="ordered locus">Rpic_2851</name>
</gene>
<comment type="function">
    <text evidence="1">Heme chaperone required for the biogenesis of c-type cytochromes. Transiently binds heme delivered by CcmC and transfers the heme to apo-cytochromes in a process facilitated by CcmF and CcmH.</text>
</comment>
<comment type="subcellular location">
    <subcellularLocation>
        <location evidence="1">Cell inner membrane</location>
        <topology evidence="1">Single-pass type II membrane protein</topology>
        <orientation evidence="1">Periplasmic side</orientation>
    </subcellularLocation>
</comment>
<comment type="similarity">
    <text evidence="1">Belongs to the CcmE/CycJ family.</text>
</comment>
<dbReference type="EMBL" id="CP001068">
    <property type="protein sequence ID" value="ACD27974.1"/>
    <property type="molecule type" value="Genomic_DNA"/>
</dbReference>
<dbReference type="SMR" id="B2UBM4"/>
<dbReference type="STRING" id="402626.Rpic_2851"/>
<dbReference type="KEGG" id="rpi:Rpic_2851"/>
<dbReference type="PATRIC" id="fig|402626.5.peg.3988"/>
<dbReference type="eggNOG" id="COG2332">
    <property type="taxonomic scope" value="Bacteria"/>
</dbReference>
<dbReference type="HOGENOM" id="CLU_079503_1_1_4"/>
<dbReference type="GO" id="GO:0005886">
    <property type="term" value="C:plasma membrane"/>
    <property type="evidence" value="ECO:0007669"/>
    <property type="project" value="UniProtKB-SubCell"/>
</dbReference>
<dbReference type="GO" id="GO:0020037">
    <property type="term" value="F:heme binding"/>
    <property type="evidence" value="ECO:0007669"/>
    <property type="project" value="InterPro"/>
</dbReference>
<dbReference type="GO" id="GO:0046872">
    <property type="term" value="F:metal ion binding"/>
    <property type="evidence" value="ECO:0007669"/>
    <property type="project" value="UniProtKB-KW"/>
</dbReference>
<dbReference type="GO" id="GO:0017004">
    <property type="term" value="P:cytochrome complex assembly"/>
    <property type="evidence" value="ECO:0007669"/>
    <property type="project" value="UniProtKB-KW"/>
</dbReference>
<dbReference type="FunFam" id="2.40.50.140:FF:000104">
    <property type="entry name" value="Cytochrome c-type biogenesis protein CcmE"/>
    <property type="match status" value="1"/>
</dbReference>
<dbReference type="Gene3D" id="2.40.50.140">
    <property type="entry name" value="Nucleic acid-binding proteins"/>
    <property type="match status" value="1"/>
</dbReference>
<dbReference type="HAMAP" id="MF_01959">
    <property type="entry name" value="CcmE"/>
    <property type="match status" value="1"/>
</dbReference>
<dbReference type="InterPro" id="IPR004329">
    <property type="entry name" value="CcmE"/>
</dbReference>
<dbReference type="InterPro" id="IPR036127">
    <property type="entry name" value="CcmE-like_sf"/>
</dbReference>
<dbReference type="InterPro" id="IPR012340">
    <property type="entry name" value="NA-bd_OB-fold"/>
</dbReference>
<dbReference type="NCBIfam" id="NF009727">
    <property type="entry name" value="PRK13254.1-1"/>
    <property type="match status" value="1"/>
</dbReference>
<dbReference type="NCBIfam" id="NF009729">
    <property type="entry name" value="PRK13254.1-3"/>
    <property type="match status" value="1"/>
</dbReference>
<dbReference type="NCBIfam" id="NF009731">
    <property type="entry name" value="PRK13254.1-5"/>
    <property type="match status" value="1"/>
</dbReference>
<dbReference type="PANTHER" id="PTHR34128">
    <property type="entry name" value="CYTOCHROME C-TYPE BIOGENESIS PROTEIN CCME HOMOLOG, MITOCHONDRIAL"/>
    <property type="match status" value="1"/>
</dbReference>
<dbReference type="PANTHER" id="PTHR34128:SF2">
    <property type="entry name" value="CYTOCHROME C-TYPE BIOGENESIS PROTEIN CCME HOMOLOG, MITOCHONDRIAL"/>
    <property type="match status" value="1"/>
</dbReference>
<dbReference type="Pfam" id="PF03100">
    <property type="entry name" value="CcmE"/>
    <property type="match status" value="1"/>
</dbReference>
<dbReference type="SUPFAM" id="SSF82093">
    <property type="entry name" value="Heme chaperone CcmE"/>
    <property type="match status" value="1"/>
</dbReference>
<accession>B2UBM4</accession>
<sequence>MTRRQRRLGILLAALVCAGAATALTLNAFRSNLVFFFSPTQIAAKEAPVAQVFRLGGLVERGSIQRERDGMTIRFIVTDTARGVPVVYHGLLPDLFREGKGVVARGRLGEDGVFVANEVLAKHDENYMPPEAADALRRAVQVNEQMAKESARSASR</sequence>
<organism>
    <name type="scientific">Ralstonia pickettii (strain 12J)</name>
    <dbReference type="NCBI Taxonomy" id="402626"/>
    <lineage>
        <taxon>Bacteria</taxon>
        <taxon>Pseudomonadati</taxon>
        <taxon>Pseudomonadota</taxon>
        <taxon>Betaproteobacteria</taxon>
        <taxon>Burkholderiales</taxon>
        <taxon>Burkholderiaceae</taxon>
        <taxon>Ralstonia</taxon>
    </lineage>
</organism>
<keyword id="KW-0997">Cell inner membrane</keyword>
<keyword id="KW-1003">Cell membrane</keyword>
<keyword id="KW-0201">Cytochrome c-type biogenesis</keyword>
<keyword id="KW-0349">Heme</keyword>
<keyword id="KW-0408">Iron</keyword>
<keyword id="KW-0472">Membrane</keyword>
<keyword id="KW-0479">Metal-binding</keyword>
<keyword id="KW-0735">Signal-anchor</keyword>
<keyword id="KW-0812">Transmembrane</keyword>
<keyword id="KW-1133">Transmembrane helix</keyword>
<evidence type="ECO:0000255" key="1">
    <source>
        <dbReference type="HAMAP-Rule" id="MF_01959"/>
    </source>
</evidence>
<name>CCME_RALPJ</name>
<reference key="1">
    <citation type="submission" date="2008-05" db="EMBL/GenBank/DDBJ databases">
        <title>Complete sequence of chromosome 1 of Ralstonia pickettii 12J.</title>
        <authorList>
            <person name="Lucas S."/>
            <person name="Copeland A."/>
            <person name="Lapidus A."/>
            <person name="Glavina del Rio T."/>
            <person name="Dalin E."/>
            <person name="Tice H."/>
            <person name="Bruce D."/>
            <person name="Goodwin L."/>
            <person name="Pitluck S."/>
            <person name="Meincke L."/>
            <person name="Brettin T."/>
            <person name="Detter J.C."/>
            <person name="Han C."/>
            <person name="Kuske C.R."/>
            <person name="Schmutz J."/>
            <person name="Larimer F."/>
            <person name="Land M."/>
            <person name="Hauser L."/>
            <person name="Kyrpides N."/>
            <person name="Mikhailova N."/>
            <person name="Marsh T."/>
            <person name="Richardson P."/>
        </authorList>
    </citation>
    <scope>NUCLEOTIDE SEQUENCE [LARGE SCALE GENOMIC DNA]</scope>
    <source>
        <strain>12J</strain>
    </source>
</reference>